<sequence>MSKKLAKKRQPVKPVVAKEPARTAKNFGYEEMLSELEAIVADAETRLAEDEATA</sequence>
<name>YHAL_ECOLI</name>
<keyword id="KW-1185">Reference proteome</keyword>
<dbReference type="EMBL" id="U18997">
    <property type="protein sequence ID" value="AAA57911.1"/>
    <property type="status" value="ALT_INIT"/>
    <property type="molecule type" value="Genomic_DNA"/>
</dbReference>
<dbReference type="EMBL" id="U00096">
    <property type="protein sequence ID" value="AAC76142.2"/>
    <property type="molecule type" value="Genomic_DNA"/>
</dbReference>
<dbReference type="EMBL" id="AP009048">
    <property type="protein sequence ID" value="BAE77157.1"/>
    <property type="molecule type" value="Genomic_DNA"/>
</dbReference>
<dbReference type="PIR" id="H65099">
    <property type="entry name" value="H65099"/>
</dbReference>
<dbReference type="RefSeq" id="NP_417578.2">
    <property type="nucleotide sequence ID" value="NC_000913.3"/>
</dbReference>
<dbReference type="RefSeq" id="WP_001345966.1">
    <property type="nucleotide sequence ID" value="NZ_LN832404.1"/>
</dbReference>
<dbReference type="SMR" id="P42625"/>
<dbReference type="BioGRID" id="4259261">
    <property type="interactions" value="7"/>
</dbReference>
<dbReference type="FunCoup" id="P42625">
    <property type="interactions" value="1"/>
</dbReference>
<dbReference type="STRING" id="511145.b3107"/>
<dbReference type="PaxDb" id="511145-b3107"/>
<dbReference type="EnsemblBacteria" id="AAC76142">
    <property type="protein sequence ID" value="AAC76142"/>
    <property type="gene ID" value="b3107"/>
</dbReference>
<dbReference type="GeneID" id="947618"/>
<dbReference type="KEGG" id="ecj:JW5517"/>
<dbReference type="KEGG" id="eco:b3107"/>
<dbReference type="PATRIC" id="fig|511145.12.peg.3203"/>
<dbReference type="EchoBASE" id="EB2607"/>
<dbReference type="eggNOG" id="ENOG5033FED">
    <property type="taxonomic scope" value="Bacteria"/>
</dbReference>
<dbReference type="HOGENOM" id="CLU_193042_0_0_6"/>
<dbReference type="InParanoid" id="P42625"/>
<dbReference type="OMA" id="FTYDCML"/>
<dbReference type="OrthoDB" id="6561951at2"/>
<dbReference type="PhylomeDB" id="P42625"/>
<dbReference type="BioCyc" id="EcoCyc:G7621-MONOMER"/>
<dbReference type="PRO" id="PR:P42625"/>
<dbReference type="Proteomes" id="UP000000625">
    <property type="component" value="Chromosome"/>
</dbReference>
<organism>
    <name type="scientific">Escherichia coli (strain K12)</name>
    <dbReference type="NCBI Taxonomy" id="83333"/>
    <lineage>
        <taxon>Bacteria</taxon>
        <taxon>Pseudomonadati</taxon>
        <taxon>Pseudomonadota</taxon>
        <taxon>Gammaproteobacteria</taxon>
        <taxon>Enterobacterales</taxon>
        <taxon>Enterobacteriaceae</taxon>
        <taxon>Escherichia</taxon>
    </lineage>
</organism>
<comment type="sequence caution" evidence="1">
    <conflict type="erroneous initiation">
        <sequence resource="EMBL-CDS" id="AAA57911"/>
    </conflict>
    <text>Extended N-terminus.</text>
</comment>
<reference key="1">
    <citation type="journal article" date="1997" name="Science">
        <title>The complete genome sequence of Escherichia coli K-12.</title>
        <authorList>
            <person name="Blattner F.R."/>
            <person name="Plunkett G. III"/>
            <person name="Bloch C.A."/>
            <person name="Perna N.T."/>
            <person name="Burland V."/>
            <person name="Riley M."/>
            <person name="Collado-Vides J."/>
            <person name="Glasner J.D."/>
            <person name="Rode C.K."/>
            <person name="Mayhew G.F."/>
            <person name="Gregor J."/>
            <person name="Davis N.W."/>
            <person name="Kirkpatrick H.A."/>
            <person name="Goeden M.A."/>
            <person name="Rose D.J."/>
            <person name="Mau B."/>
            <person name="Shao Y."/>
        </authorList>
    </citation>
    <scope>NUCLEOTIDE SEQUENCE [LARGE SCALE GENOMIC DNA]</scope>
    <source>
        <strain>K12 / MG1655 / ATCC 47076</strain>
    </source>
</reference>
<reference key="2">
    <citation type="journal article" date="2006" name="Mol. Syst. Biol.">
        <title>Highly accurate genome sequences of Escherichia coli K-12 strains MG1655 and W3110.</title>
        <authorList>
            <person name="Hayashi K."/>
            <person name="Morooka N."/>
            <person name="Yamamoto Y."/>
            <person name="Fujita K."/>
            <person name="Isono K."/>
            <person name="Choi S."/>
            <person name="Ohtsubo E."/>
            <person name="Baba T."/>
            <person name="Wanner B.L."/>
            <person name="Mori H."/>
            <person name="Horiuchi T."/>
        </authorList>
    </citation>
    <scope>NUCLEOTIDE SEQUENCE [LARGE SCALE GENOMIC DNA]</scope>
    <source>
        <strain>K12 / W3110 / ATCC 27325 / DSM 5911</strain>
    </source>
</reference>
<feature type="chain" id="PRO_0000169447" description="Uncharacterized protein YhaL">
    <location>
        <begin position="1"/>
        <end position="54"/>
    </location>
</feature>
<gene>
    <name type="primary">yhaL</name>
    <name type="ordered locus">b3107</name>
    <name type="ordered locus">JW5517</name>
</gene>
<proteinExistence type="predicted"/>
<accession>P42625</accession>
<accession>Q2M999</accession>
<protein>
    <recommendedName>
        <fullName>Uncharacterized protein YhaL</fullName>
    </recommendedName>
</protein>
<evidence type="ECO:0000305" key="1"/>